<organism>
    <name type="scientific">Brucella anthropi (strain ATCC 49188 / DSM 6882 / CCUG 24695 / JCM 21032 / LMG 3331 / NBRC 15819 / NCTC 12168 / Alc 37)</name>
    <name type="common">Ochrobactrum anthropi</name>
    <dbReference type="NCBI Taxonomy" id="439375"/>
    <lineage>
        <taxon>Bacteria</taxon>
        <taxon>Pseudomonadati</taxon>
        <taxon>Pseudomonadota</taxon>
        <taxon>Alphaproteobacteria</taxon>
        <taxon>Hyphomicrobiales</taxon>
        <taxon>Brucellaceae</taxon>
        <taxon>Brucella/Ochrobactrum group</taxon>
        <taxon>Brucella</taxon>
    </lineage>
</organism>
<keyword id="KW-0012">Acyltransferase</keyword>
<keyword id="KW-0963">Cytoplasm</keyword>
<keyword id="KW-0441">Lipid A biosynthesis</keyword>
<keyword id="KW-0444">Lipid biosynthesis</keyword>
<keyword id="KW-0443">Lipid metabolism</keyword>
<keyword id="KW-1185">Reference proteome</keyword>
<keyword id="KW-0677">Repeat</keyword>
<keyword id="KW-0808">Transferase</keyword>
<name>LPXA_BRUA4</name>
<evidence type="ECO:0000255" key="1">
    <source>
        <dbReference type="HAMAP-Rule" id="MF_00387"/>
    </source>
</evidence>
<proteinExistence type="inferred from homology"/>
<dbReference type="EC" id="2.3.1.129" evidence="1"/>
<dbReference type="EMBL" id="CP000758">
    <property type="protein sequence ID" value="ABS14755.1"/>
    <property type="molecule type" value="Genomic_DNA"/>
</dbReference>
<dbReference type="RefSeq" id="WP_012091957.1">
    <property type="nucleotide sequence ID" value="NC_009667.1"/>
</dbReference>
<dbReference type="SMR" id="A6X0K1"/>
<dbReference type="STRING" id="439375.Oant_2039"/>
<dbReference type="KEGG" id="oan:Oant_2039"/>
<dbReference type="PATRIC" id="fig|439375.7.peg.2144"/>
<dbReference type="eggNOG" id="COG1043">
    <property type="taxonomic scope" value="Bacteria"/>
</dbReference>
<dbReference type="HOGENOM" id="CLU_061249_0_0_5"/>
<dbReference type="PhylomeDB" id="A6X0K1"/>
<dbReference type="UniPathway" id="UPA00359">
    <property type="reaction ID" value="UER00477"/>
</dbReference>
<dbReference type="Proteomes" id="UP000002301">
    <property type="component" value="Chromosome 1"/>
</dbReference>
<dbReference type="GO" id="GO:0005737">
    <property type="term" value="C:cytoplasm"/>
    <property type="evidence" value="ECO:0007669"/>
    <property type="project" value="UniProtKB-SubCell"/>
</dbReference>
<dbReference type="GO" id="GO:0016020">
    <property type="term" value="C:membrane"/>
    <property type="evidence" value="ECO:0007669"/>
    <property type="project" value="GOC"/>
</dbReference>
<dbReference type="GO" id="GO:0008780">
    <property type="term" value="F:acyl-[acyl-carrier-protein]-UDP-N-acetylglucosamine O-acyltransferase activity"/>
    <property type="evidence" value="ECO:0007669"/>
    <property type="project" value="UniProtKB-UniRule"/>
</dbReference>
<dbReference type="GO" id="GO:0009245">
    <property type="term" value="P:lipid A biosynthetic process"/>
    <property type="evidence" value="ECO:0007669"/>
    <property type="project" value="UniProtKB-UniRule"/>
</dbReference>
<dbReference type="CDD" id="cd03351">
    <property type="entry name" value="LbH_UDP-GlcNAc_AT"/>
    <property type="match status" value="1"/>
</dbReference>
<dbReference type="Gene3D" id="2.160.10.10">
    <property type="entry name" value="Hexapeptide repeat proteins"/>
    <property type="match status" value="1"/>
</dbReference>
<dbReference type="Gene3D" id="1.20.1180.10">
    <property type="entry name" value="Udp N-acetylglucosamine O-acyltransferase, C-terminal domain"/>
    <property type="match status" value="1"/>
</dbReference>
<dbReference type="HAMAP" id="MF_00387">
    <property type="entry name" value="LpxA"/>
    <property type="match status" value="1"/>
</dbReference>
<dbReference type="InterPro" id="IPR029098">
    <property type="entry name" value="Acetyltransf_C"/>
</dbReference>
<dbReference type="InterPro" id="IPR037157">
    <property type="entry name" value="Acetyltransf_C_sf"/>
</dbReference>
<dbReference type="InterPro" id="IPR001451">
    <property type="entry name" value="Hexapep"/>
</dbReference>
<dbReference type="InterPro" id="IPR018357">
    <property type="entry name" value="Hexapep_transf_CS"/>
</dbReference>
<dbReference type="InterPro" id="IPR010137">
    <property type="entry name" value="Lipid_A_LpxA"/>
</dbReference>
<dbReference type="InterPro" id="IPR011004">
    <property type="entry name" value="Trimer_LpxA-like_sf"/>
</dbReference>
<dbReference type="NCBIfam" id="TIGR01852">
    <property type="entry name" value="lipid_A_lpxA"/>
    <property type="match status" value="1"/>
</dbReference>
<dbReference type="NCBIfam" id="NF003657">
    <property type="entry name" value="PRK05289.1"/>
    <property type="match status" value="1"/>
</dbReference>
<dbReference type="PANTHER" id="PTHR43480">
    <property type="entry name" value="ACYL-[ACYL-CARRIER-PROTEIN]--UDP-N-ACETYLGLUCOSAMINE O-ACYLTRANSFERASE"/>
    <property type="match status" value="1"/>
</dbReference>
<dbReference type="PANTHER" id="PTHR43480:SF1">
    <property type="entry name" value="ACYL-[ACYL-CARRIER-PROTEIN]--UDP-N-ACETYLGLUCOSAMINE O-ACYLTRANSFERASE, MITOCHONDRIAL-RELATED"/>
    <property type="match status" value="1"/>
</dbReference>
<dbReference type="Pfam" id="PF13720">
    <property type="entry name" value="Acetyltransf_11"/>
    <property type="match status" value="1"/>
</dbReference>
<dbReference type="Pfam" id="PF00132">
    <property type="entry name" value="Hexapep"/>
    <property type="match status" value="1"/>
</dbReference>
<dbReference type="PIRSF" id="PIRSF000456">
    <property type="entry name" value="UDP-GlcNAc_acltr"/>
    <property type="match status" value="1"/>
</dbReference>
<dbReference type="SUPFAM" id="SSF51161">
    <property type="entry name" value="Trimeric LpxA-like enzymes"/>
    <property type="match status" value="1"/>
</dbReference>
<dbReference type="PROSITE" id="PS00101">
    <property type="entry name" value="HEXAPEP_TRANSFERASES"/>
    <property type="match status" value="1"/>
</dbReference>
<accession>A6X0K1</accession>
<feature type="chain" id="PRO_1000013170" description="Acyl-[acyl-carrier-protein]--UDP-N-acetylglucosamine O-acyltransferase">
    <location>
        <begin position="1"/>
        <end position="278"/>
    </location>
</feature>
<reference key="1">
    <citation type="journal article" date="2011" name="J. Bacteriol.">
        <title>Genome of Ochrobactrum anthropi ATCC 49188 T, a versatile opportunistic pathogen and symbiont of several eukaryotic hosts.</title>
        <authorList>
            <person name="Chain P.S."/>
            <person name="Lang D.M."/>
            <person name="Comerci D.J."/>
            <person name="Malfatti S.A."/>
            <person name="Vergez L.M."/>
            <person name="Shin M."/>
            <person name="Ugalde R.A."/>
            <person name="Garcia E."/>
            <person name="Tolmasky M.E."/>
        </authorList>
    </citation>
    <scope>NUCLEOTIDE SEQUENCE [LARGE SCALE GENOMIC DNA]</scope>
    <source>
        <strain>ATCC 49188 / DSM 6882 / CCUG 24695 / JCM 21032 / LMG 3331 / NBRC 15819 / NCTC 12168 / Alc 37</strain>
    </source>
</reference>
<sequence>MKETFIHPTALVEQGVELGQGVSVGPFCHIQSGAVIGDNSELMSHVVVTGATTLGTGGKVYPHAVLGCDPQNNKHKGGPTKLNIGANCLIREGVTMHKGSDSARGYTSVGDNCSFLAYAHVAHDCDIGDYVTFSNNVMIGGHTTIGHHAILGGGAAIHQFVRVGHHAFVGGMAAVVSDLIPYGMAIGVHAHLGGLNIVGMKRSGMERKEIHNLRHAVRMLFDRTKPIRDRAKDVLTAIPDSPAVIDMIDFINVDTKRAYCTPPLDAVHGGAGHDSGED</sequence>
<comment type="function">
    <text evidence="1">Involved in the biosynthesis of lipid A, a phosphorylated glycolipid that anchors the lipopolysaccharide to the outer membrane of the cell.</text>
</comment>
<comment type="catalytic activity">
    <reaction evidence="1">
        <text>a (3R)-hydroxyacyl-[ACP] + UDP-N-acetyl-alpha-D-glucosamine = a UDP-3-O-[(3R)-3-hydroxyacyl]-N-acetyl-alpha-D-glucosamine + holo-[ACP]</text>
        <dbReference type="Rhea" id="RHEA:67812"/>
        <dbReference type="Rhea" id="RHEA-COMP:9685"/>
        <dbReference type="Rhea" id="RHEA-COMP:9945"/>
        <dbReference type="ChEBI" id="CHEBI:57705"/>
        <dbReference type="ChEBI" id="CHEBI:64479"/>
        <dbReference type="ChEBI" id="CHEBI:78827"/>
        <dbReference type="ChEBI" id="CHEBI:173225"/>
        <dbReference type="EC" id="2.3.1.129"/>
    </reaction>
</comment>
<comment type="pathway">
    <text evidence="1">Glycolipid biosynthesis; lipid IV(A) biosynthesis; lipid IV(A) from (3R)-3-hydroxytetradecanoyl-[acyl-carrier-protein] and UDP-N-acetyl-alpha-D-glucosamine: step 1/6.</text>
</comment>
<comment type="subunit">
    <text evidence="1">Homotrimer.</text>
</comment>
<comment type="subcellular location">
    <subcellularLocation>
        <location evidence="1">Cytoplasm</location>
    </subcellularLocation>
</comment>
<comment type="similarity">
    <text evidence="1">Belongs to the transferase hexapeptide repeat family. LpxA subfamily.</text>
</comment>
<protein>
    <recommendedName>
        <fullName evidence="1">Acyl-[acyl-carrier-protein]--UDP-N-acetylglucosamine O-acyltransferase</fullName>
        <shortName evidence="1">UDP-N-acetylglucosamine acyltransferase</shortName>
        <ecNumber evidence="1">2.3.1.129</ecNumber>
    </recommendedName>
</protein>
<gene>
    <name evidence="1" type="primary">lpxA</name>
    <name type="ordered locus">Oant_2039</name>
</gene>